<reference key="1">
    <citation type="journal article" date="1998" name="FEBS Lett.">
        <title>Human cathepsin X: a novel cysteine protease of the papain family with a very short proregion and unique insertions.</title>
        <authorList>
            <person name="Naegler D.K."/>
            <person name="Menard R."/>
        </authorList>
    </citation>
    <scope>NUCLEOTIDE SEQUENCE [MRNA]</scope>
    <scope>VARIANTS SER-36 AND ARG-129</scope>
    <source>
        <tissue>Ovary</tissue>
    </source>
</reference>
<reference key="2">
    <citation type="journal article" date="1998" name="J. Biol. Chem.">
        <title>Cathepsin Z, a novel human cysteine proteinase with a short propeptide domain and a unique chromosomal location.</title>
        <authorList>
            <person name="Santamaria I."/>
            <person name="Velasco G."/>
            <person name="Pendas A.M."/>
            <person name="Fueyo A."/>
            <person name="Lopez-Otin C."/>
        </authorList>
    </citation>
    <scope>NUCLEOTIDE SEQUENCE [MRNA]</scope>
    <source>
        <tissue>Prostate</tissue>
    </source>
</reference>
<reference key="3">
    <citation type="journal article" date="2000" name="Biochim. Biophys. Acta">
        <title>Murine and human cathepsin Z: cDNA-cloning, characterization of the genes and chromosomal localization.</title>
        <authorList>
            <person name="Deussing J."/>
            <person name="von Olshausen I."/>
            <person name="Peters C."/>
        </authorList>
    </citation>
    <scope>NUCLEOTIDE SEQUENCE [GENOMIC DNA / MRNA]</scope>
    <source>
        <tissue>Blood</tissue>
        <tissue>Colon tumor</tissue>
    </source>
</reference>
<reference key="4">
    <citation type="journal article" date="2004" name="Nat. Genet.">
        <title>Complete sequencing and characterization of 21,243 full-length human cDNAs.</title>
        <authorList>
            <person name="Ota T."/>
            <person name="Suzuki Y."/>
            <person name="Nishikawa T."/>
            <person name="Otsuki T."/>
            <person name="Sugiyama T."/>
            <person name="Irie R."/>
            <person name="Wakamatsu A."/>
            <person name="Hayashi K."/>
            <person name="Sato H."/>
            <person name="Nagai K."/>
            <person name="Kimura K."/>
            <person name="Makita H."/>
            <person name="Sekine M."/>
            <person name="Obayashi M."/>
            <person name="Nishi T."/>
            <person name="Shibahara T."/>
            <person name="Tanaka T."/>
            <person name="Ishii S."/>
            <person name="Yamamoto J."/>
            <person name="Saito K."/>
            <person name="Kawai Y."/>
            <person name="Isono Y."/>
            <person name="Nakamura Y."/>
            <person name="Nagahari K."/>
            <person name="Murakami K."/>
            <person name="Yasuda T."/>
            <person name="Iwayanagi T."/>
            <person name="Wagatsuma M."/>
            <person name="Shiratori A."/>
            <person name="Sudo H."/>
            <person name="Hosoiri T."/>
            <person name="Kaku Y."/>
            <person name="Kodaira H."/>
            <person name="Kondo H."/>
            <person name="Sugawara M."/>
            <person name="Takahashi M."/>
            <person name="Kanda K."/>
            <person name="Yokoi T."/>
            <person name="Furuya T."/>
            <person name="Kikkawa E."/>
            <person name="Omura Y."/>
            <person name="Abe K."/>
            <person name="Kamihara K."/>
            <person name="Katsuta N."/>
            <person name="Sato K."/>
            <person name="Tanikawa M."/>
            <person name="Yamazaki M."/>
            <person name="Ninomiya K."/>
            <person name="Ishibashi T."/>
            <person name="Yamashita H."/>
            <person name="Murakawa K."/>
            <person name="Fujimori K."/>
            <person name="Tanai H."/>
            <person name="Kimata M."/>
            <person name="Watanabe M."/>
            <person name="Hiraoka S."/>
            <person name="Chiba Y."/>
            <person name="Ishida S."/>
            <person name="Ono Y."/>
            <person name="Takiguchi S."/>
            <person name="Watanabe S."/>
            <person name="Yosida M."/>
            <person name="Hotuta T."/>
            <person name="Kusano J."/>
            <person name="Kanehori K."/>
            <person name="Takahashi-Fujii A."/>
            <person name="Hara H."/>
            <person name="Tanase T.-O."/>
            <person name="Nomura Y."/>
            <person name="Togiya S."/>
            <person name="Komai F."/>
            <person name="Hara R."/>
            <person name="Takeuchi K."/>
            <person name="Arita M."/>
            <person name="Imose N."/>
            <person name="Musashino K."/>
            <person name="Yuuki H."/>
            <person name="Oshima A."/>
            <person name="Sasaki N."/>
            <person name="Aotsuka S."/>
            <person name="Yoshikawa Y."/>
            <person name="Matsunawa H."/>
            <person name="Ichihara T."/>
            <person name="Shiohata N."/>
            <person name="Sano S."/>
            <person name="Moriya S."/>
            <person name="Momiyama H."/>
            <person name="Satoh N."/>
            <person name="Takami S."/>
            <person name="Terashima Y."/>
            <person name="Suzuki O."/>
            <person name="Nakagawa S."/>
            <person name="Senoh A."/>
            <person name="Mizoguchi H."/>
            <person name="Goto Y."/>
            <person name="Shimizu F."/>
            <person name="Wakebe H."/>
            <person name="Hishigaki H."/>
            <person name="Watanabe T."/>
            <person name="Sugiyama A."/>
            <person name="Takemoto M."/>
            <person name="Kawakami B."/>
            <person name="Yamazaki M."/>
            <person name="Watanabe K."/>
            <person name="Kumagai A."/>
            <person name="Itakura S."/>
            <person name="Fukuzumi Y."/>
            <person name="Fujimori Y."/>
            <person name="Komiyama M."/>
            <person name="Tashiro H."/>
            <person name="Tanigami A."/>
            <person name="Fujiwara T."/>
            <person name="Ono T."/>
            <person name="Yamada K."/>
            <person name="Fujii Y."/>
            <person name="Ozaki K."/>
            <person name="Hirao M."/>
            <person name="Ohmori Y."/>
            <person name="Kawabata A."/>
            <person name="Hikiji T."/>
            <person name="Kobatake N."/>
            <person name="Inagaki H."/>
            <person name="Ikema Y."/>
            <person name="Okamoto S."/>
            <person name="Okitani R."/>
            <person name="Kawakami T."/>
            <person name="Noguchi S."/>
            <person name="Itoh T."/>
            <person name="Shigeta K."/>
            <person name="Senba T."/>
            <person name="Matsumura K."/>
            <person name="Nakajima Y."/>
            <person name="Mizuno T."/>
            <person name="Morinaga M."/>
            <person name="Sasaki M."/>
            <person name="Togashi T."/>
            <person name="Oyama M."/>
            <person name="Hata H."/>
            <person name="Watanabe M."/>
            <person name="Komatsu T."/>
            <person name="Mizushima-Sugano J."/>
            <person name="Satoh T."/>
            <person name="Shirai Y."/>
            <person name="Takahashi Y."/>
            <person name="Nakagawa K."/>
            <person name="Okumura K."/>
            <person name="Nagase T."/>
            <person name="Nomura N."/>
            <person name="Kikuchi H."/>
            <person name="Masuho Y."/>
            <person name="Yamashita R."/>
            <person name="Nakai K."/>
            <person name="Yada T."/>
            <person name="Nakamura Y."/>
            <person name="Ohara O."/>
            <person name="Isogai T."/>
            <person name="Sugano S."/>
        </authorList>
    </citation>
    <scope>NUCLEOTIDE SEQUENCE [LARGE SCALE MRNA]</scope>
    <source>
        <tissue>Colon</tissue>
    </source>
</reference>
<reference key="5">
    <citation type="journal article" date="2001" name="Nature">
        <title>The DNA sequence and comparative analysis of human chromosome 20.</title>
        <authorList>
            <person name="Deloukas P."/>
            <person name="Matthews L.H."/>
            <person name="Ashurst J.L."/>
            <person name="Burton J."/>
            <person name="Gilbert J.G.R."/>
            <person name="Jones M."/>
            <person name="Stavrides G."/>
            <person name="Almeida J.P."/>
            <person name="Babbage A.K."/>
            <person name="Bagguley C.L."/>
            <person name="Bailey J."/>
            <person name="Barlow K.F."/>
            <person name="Bates K.N."/>
            <person name="Beard L.M."/>
            <person name="Beare D.M."/>
            <person name="Beasley O.P."/>
            <person name="Bird C.P."/>
            <person name="Blakey S.E."/>
            <person name="Bridgeman A.M."/>
            <person name="Brown A.J."/>
            <person name="Buck D."/>
            <person name="Burrill W.D."/>
            <person name="Butler A.P."/>
            <person name="Carder C."/>
            <person name="Carter N.P."/>
            <person name="Chapman J.C."/>
            <person name="Clamp M."/>
            <person name="Clark G."/>
            <person name="Clark L.N."/>
            <person name="Clark S.Y."/>
            <person name="Clee C.M."/>
            <person name="Clegg S."/>
            <person name="Cobley V.E."/>
            <person name="Collier R.E."/>
            <person name="Connor R.E."/>
            <person name="Corby N.R."/>
            <person name="Coulson A."/>
            <person name="Coville G.J."/>
            <person name="Deadman R."/>
            <person name="Dhami P.D."/>
            <person name="Dunn M."/>
            <person name="Ellington A.G."/>
            <person name="Frankland J.A."/>
            <person name="Fraser A."/>
            <person name="French L."/>
            <person name="Garner P."/>
            <person name="Grafham D.V."/>
            <person name="Griffiths C."/>
            <person name="Griffiths M.N.D."/>
            <person name="Gwilliam R."/>
            <person name="Hall R.E."/>
            <person name="Hammond S."/>
            <person name="Harley J.L."/>
            <person name="Heath P.D."/>
            <person name="Ho S."/>
            <person name="Holden J.L."/>
            <person name="Howden P.J."/>
            <person name="Huckle E."/>
            <person name="Hunt A.R."/>
            <person name="Hunt S.E."/>
            <person name="Jekosch K."/>
            <person name="Johnson C.M."/>
            <person name="Johnson D."/>
            <person name="Kay M.P."/>
            <person name="Kimberley A.M."/>
            <person name="King A."/>
            <person name="Knights A."/>
            <person name="Laird G.K."/>
            <person name="Lawlor S."/>
            <person name="Lehvaeslaiho M.H."/>
            <person name="Leversha M.A."/>
            <person name="Lloyd C."/>
            <person name="Lloyd D.M."/>
            <person name="Lovell J.D."/>
            <person name="Marsh V.L."/>
            <person name="Martin S.L."/>
            <person name="McConnachie L.J."/>
            <person name="McLay K."/>
            <person name="McMurray A.A."/>
            <person name="Milne S.A."/>
            <person name="Mistry D."/>
            <person name="Moore M.J.F."/>
            <person name="Mullikin J.C."/>
            <person name="Nickerson T."/>
            <person name="Oliver K."/>
            <person name="Parker A."/>
            <person name="Patel R."/>
            <person name="Pearce T.A.V."/>
            <person name="Peck A.I."/>
            <person name="Phillimore B.J.C.T."/>
            <person name="Prathalingam S.R."/>
            <person name="Plumb R.W."/>
            <person name="Ramsay H."/>
            <person name="Rice C.M."/>
            <person name="Ross M.T."/>
            <person name="Scott C.E."/>
            <person name="Sehra H.K."/>
            <person name="Shownkeen R."/>
            <person name="Sims S."/>
            <person name="Skuce C.D."/>
            <person name="Smith M.L."/>
            <person name="Soderlund C."/>
            <person name="Steward C.A."/>
            <person name="Sulston J.E."/>
            <person name="Swann R.M."/>
            <person name="Sycamore N."/>
            <person name="Taylor R."/>
            <person name="Tee L."/>
            <person name="Thomas D.W."/>
            <person name="Thorpe A."/>
            <person name="Tracey A."/>
            <person name="Tromans A.C."/>
            <person name="Vaudin M."/>
            <person name="Wall M."/>
            <person name="Wallis J.M."/>
            <person name="Whitehead S.L."/>
            <person name="Whittaker P."/>
            <person name="Willey D.L."/>
            <person name="Williams L."/>
            <person name="Williams S.A."/>
            <person name="Wilming L."/>
            <person name="Wray P.W."/>
            <person name="Hubbard T."/>
            <person name="Durbin R.M."/>
            <person name="Bentley D.R."/>
            <person name="Beck S."/>
            <person name="Rogers J."/>
        </authorList>
    </citation>
    <scope>NUCLEOTIDE SEQUENCE [LARGE SCALE GENOMIC DNA]</scope>
</reference>
<reference key="6">
    <citation type="submission" date="2005-09" db="EMBL/GenBank/DDBJ databases">
        <authorList>
            <person name="Mural R.J."/>
            <person name="Istrail S."/>
            <person name="Sutton G.G."/>
            <person name="Florea L."/>
            <person name="Halpern A.L."/>
            <person name="Mobarry C.M."/>
            <person name="Lippert R."/>
            <person name="Walenz B."/>
            <person name="Shatkay H."/>
            <person name="Dew I."/>
            <person name="Miller J.R."/>
            <person name="Flanigan M.J."/>
            <person name="Edwards N.J."/>
            <person name="Bolanos R."/>
            <person name="Fasulo D."/>
            <person name="Halldorsson B.V."/>
            <person name="Hannenhalli S."/>
            <person name="Turner R."/>
            <person name="Yooseph S."/>
            <person name="Lu F."/>
            <person name="Nusskern D.R."/>
            <person name="Shue B.C."/>
            <person name="Zheng X.H."/>
            <person name="Zhong F."/>
            <person name="Delcher A.L."/>
            <person name="Huson D.H."/>
            <person name="Kravitz S.A."/>
            <person name="Mouchard L."/>
            <person name="Reinert K."/>
            <person name="Remington K.A."/>
            <person name="Clark A.G."/>
            <person name="Waterman M.S."/>
            <person name="Eichler E.E."/>
            <person name="Adams M.D."/>
            <person name="Hunkapiller M.W."/>
            <person name="Myers E.W."/>
            <person name="Venter J.C."/>
        </authorList>
    </citation>
    <scope>NUCLEOTIDE SEQUENCE [LARGE SCALE GENOMIC DNA]</scope>
</reference>
<reference key="7">
    <citation type="journal article" date="2004" name="Genome Res.">
        <title>The status, quality, and expansion of the NIH full-length cDNA project: the Mammalian Gene Collection (MGC).</title>
        <authorList>
            <consortium name="The MGC Project Team"/>
        </authorList>
    </citation>
    <scope>NUCLEOTIDE SEQUENCE [LARGE SCALE MRNA]</scope>
    <source>
        <tissue>Pancreas</tissue>
    </source>
</reference>
<reference key="8">
    <citation type="journal article" date="2000" name="Pflugers Arch.">
        <title>Identification and molecular cloning of cathepsin P, a novel human putative cysteine protease of the papain family.</title>
        <authorList>
            <person name="Pungercar J."/>
            <person name="Ivanovski G."/>
        </authorList>
    </citation>
    <scope>NUCLEOTIDE SEQUENCE OF 11-303</scope>
    <source>
        <tissue>Ileum</tissue>
    </source>
</reference>
<reference key="9">
    <citation type="journal article" date="1999" name="Biochemistry">
        <title>Human cathepsin X: a cysteine protease with unique carboxypeptidase activity.</title>
        <authorList>
            <person name="Naegler D.K."/>
            <person name="Zhang R."/>
            <person name="Tam W."/>
            <person name="Sulea T."/>
            <person name="Purisima E.O."/>
            <person name="Menard R."/>
        </authorList>
    </citation>
    <scope>FUNCTION</scope>
    <scope>CATALYTIC ACTIVITY</scope>
</reference>
<reference key="10">
    <citation type="journal article" date="2000" name="Pflugers Arch.">
        <title>Tissue expression and immunolocalization of a novel human cathepsin P.</title>
        <authorList>
            <person name="Pungercar J."/>
            <person name="Viyjak A."/>
            <person name="Ivanovski G."/>
            <person name="Krizaj I."/>
        </authorList>
    </citation>
    <scope>TISSUE SPECIFICITY</scope>
</reference>
<reference key="11">
    <citation type="journal article" date="2009" name="J. Proteome Res.">
        <title>Glycoproteomics analysis of human liver tissue by combination of multiple enzyme digestion and hydrazide chemistry.</title>
        <authorList>
            <person name="Chen R."/>
            <person name="Jiang X."/>
            <person name="Sun D."/>
            <person name="Han G."/>
            <person name="Wang F."/>
            <person name="Ye M."/>
            <person name="Wang L."/>
            <person name="Zou H."/>
        </authorList>
    </citation>
    <scope>GLYCOSYLATION [LARGE SCALE ANALYSIS] AT ASN-184</scope>
    <source>
        <tissue>Liver</tissue>
    </source>
</reference>
<reference key="12">
    <citation type="journal article" date="2011" name="BMC Syst. Biol.">
        <title>Initial characterization of the human central proteome.</title>
        <authorList>
            <person name="Burkard T.R."/>
            <person name="Planyavsky M."/>
            <person name="Kaupe I."/>
            <person name="Breitwieser F.P."/>
            <person name="Buerckstuemmer T."/>
            <person name="Bennett K.L."/>
            <person name="Superti-Furga G."/>
            <person name="Colinge J."/>
        </authorList>
    </citation>
    <scope>IDENTIFICATION BY MASS SPECTROMETRY [LARGE SCALE ANALYSIS]</scope>
</reference>
<reference key="13">
    <citation type="journal article" date="2014" name="J. Proteomics">
        <title>An enzyme assisted RP-RPLC approach for in-depth analysis of human liver phosphoproteome.</title>
        <authorList>
            <person name="Bian Y."/>
            <person name="Song C."/>
            <person name="Cheng K."/>
            <person name="Dong M."/>
            <person name="Wang F."/>
            <person name="Huang J."/>
            <person name="Sun D."/>
            <person name="Wang L."/>
            <person name="Ye M."/>
            <person name="Zou H."/>
        </authorList>
    </citation>
    <scope>IDENTIFICATION BY MASS SPECTROMETRY [LARGE SCALE ANALYSIS]</scope>
    <source>
        <tissue>Liver</tissue>
    </source>
</reference>
<reference key="14">
    <citation type="journal article" date="2015" name="Proteomics">
        <title>N-terminome analysis of the human mitochondrial proteome.</title>
        <authorList>
            <person name="Vaca Jacome A.S."/>
            <person name="Rabilloud T."/>
            <person name="Schaeffer-Reiss C."/>
            <person name="Rompais M."/>
            <person name="Ayoub D."/>
            <person name="Lane L."/>
            <person name="Bairoch A."/>
            <person name="Van Dorsselaer A."/>
            <person name="Carapito C."/>
        </authorList>
    </citation>
    <scope>IDENTIFICATION BY MASS SPECTROMETRY [LARGE SCALE ANALYSIS]</scope>
</reference>
<reference evidence="13" key="15">
    <citation type="journal article" date="2000" name="J. Mol. Biol.">
        <title>Crystal structure of human procathepsin X: a cysteine protease with the proregion covalently linked to the active site cysteine.</title>
        <authorList>
            <person name="Sivaraman J."/>
            <person name="Nagler D.K."/>
            <person name="Zhang R."/>
            <person name="Menard R."/>
            <person name="Cygler M."/>
        </authorList>
    </citation>
    <scope>X-RAY CRYSTALLOGRAPHY (1.70 ANGSTROMS) OF 27-303</scope>
    <scope>ACTIVITY REGULATION</scope>
    <scope>DISULFIDE BONDS</scope>
    <scope>ACTIVE SITE</scope>
</reference>
<reference key="16">
    <citation type="journal article" date="2000" name="Structure">
        <title>Crystal structure of cathepsin X: a flip-flop of the ring of His23 allows carboxy-monopeptidase and carboxy-dipeptidase activity of the protease.</title>
        <authorList>
            <person name="Guncar G."/>
            <person name="Klemencic I."/>
            <person name="Turk B."/>
            <person name="Turk V."/>
            <person name="Karaoglanovic-Carmona A."/>
            <person name="Juliano L."/>
            <person name="Turk D."/>
        </authorList>
    </citation>
    <scope>X-RAY CRYSTALLOGRAPHY (2.67 ANGSTROMS)</scope>
    <scope>DISULFIDE BONDS</scope>
    <scope>ACTIVE SITE</scope>
</reference>
<dbReference type="EC" id="3.4.18.1" evidence="4"/>
<dbReference type="EMBL" id="AF073890">
    <property type="protein sequence ID" value="AAC61477.1"/>
    <property type="molecule type" value="mRNA"/>
</dbReference>
<dbReference type="EMBL" id="AF032906">
    <property type="protein sequence ID" value="AAC39839.1"/>
    <property type="molecule type" value="mRNA"/>
</dbReference>
<dbReference type="EMBL" id="AF136273">
    <property type="protein sequence ID" value="AAF13145.1"/>
    <property type="molecule type" value="mRNA"/>
</dbReference>
<dbReference type="EMBL" id="AF136276">
    <property type="protein sequence ID" value="AAF13148.1"/>
    <property type="molecule type" value="Genomic_DNA"/>
</dbReference>
<dbReference type="EMBL" id="AF136274">
    <property type="protein sequence ID" value="AAF13148.1"/>
    <property type="status" value="JOINED"/>
    <property type="molecule type" value="Genomic_DNA"/>
</dbReference>
<dbReference type="EMBL" id="AF136275">
    <property type="protein sequence ID" value="AAF13148.1"/>
    <property type="status" value="JOINED"/>
    <property type="molecule type" value="Genomic_DNA"/>
</dbReference>
<dbReference type="EMBL" id="AK314931">
    <property type="protein sequence ID" value="BAG37437.1"/>
    <property type="molecule type" value="mRNA"/>
</dbReference>
<dbReference type="EMBL" id="AL109840">
    <property type="status" value="NOT_ANNOTATED_CDS"/>
    <property type="molecule type" value="Genomic_DNA"/>
</dbReference>
<dbReference type="EMBL" id="CH471077">
    <property type="protein sequence ID" value="EAW75448.1"/>
    <property type="molecule type" value="Genomic_DNA"/>
</dbReference>
<dbReference type="EMBL" id="BC042168">
    <property type="protein sequence ID" value="AAH42168.1"/>
    <property type="molecule type" value="mRNA"/>
</dbReference>
<dbReference type="EMBL" id="AF009923">
    <property type="protein sequence ID" value="AAC63141.1"/>
    <property type="molecule type" value="mRNA"/>
</dbReference>
<dbReference type="CCDS" id="CCDS13474.1"/>
<dbReference type="RefSeq" id="NP_001327.2">
    <property type="nucleotide sequence ID" value="NM_001336.3"/>
</dbReference>
<dbReference type="PDB" id="1DEU">
    <property type="method" value="X-ray"/>
    <property type="resolution" value="1.70 A"/>
    <property type="chains" value="A/B=27-303"/>
</dbReference>
<dbReference type="PDB" id="1EF7">
    <property type="method" value="X-ray"/>
    <property type="resolution" value="2.67 A"/>
    <property type="chains" value="A/B=62-303"/>
</dbReference>
<dbReference type="PDBsum" id="1DEU"/>
<dbReference type="PDBsum" id="1EF7"/>
<dbReference type="SASBDB" id="Q9UBR2"/>
<dbReference type="SMR" id="Q9UBR2"/>
<dbReference type="BioGRID" id="107902">
    <property type="interactions" value="53"/>
</dbReference>
<dbReference type="FunCoup" id="Q9UBR2">
    <property type="interactions" value="557"/>
</dbReference>
<dbReference type="IntAct" id="Q9UBR2">
    <property type="interactions" value="30"/>
</dbReference>
<dbReference type="MINT" id="Q9UBR2"/>
<dbReference type="STRING" id="9606.ENSP00000217131"/>
<dbReference type="BindingDB" id="Q9UBR2"/>
<dbReference type="ChEMBL" id="CHEMBL4160"/>
<dbReference type="GuidetoPHARMACOLOGY" id="2354"/>
<dbReference type="MEROPS" id="C01.013"/>
<dbReference type="GlyConnect" id="1082">
    <property type="glycosylation" value="7 N-Linked glycans (1 site)"/>
</dbReference>
<dbReference type="GlyCosmos" id="Q9UBR2">
    <property type="glycosylation" value="2 sites, 6 glycans"/>
</dbReference>
<dbReference type="GlyGen" id="Q9UBR2">
    <property type="glycosylation" value="3 sites, 19 N-linked glycans (1 site), 1 O-linked glycan (1 site)"/>
</dbReference>
<dbReference type="iPTMnet" id="Q9UBR2"/>
<dbReference type="PhosphoSitePlus" id="Q9UBR2"/>
<dbReference type="SwissPalm" id="Q9UBR2"/>
<dbReference type="BioMuta" id="CTSZ"/>
<dbReference type="DMDM" id="12643324"/>
<dbReference type="CPTAC" id="CPTAC-53"/>
<dbReference type="CPTAC" id="CPTAC-54"/>
<dbReference type="jPOST" id="Q9UBR2"/>
<dbReference type="MassIVE" id="Q9UBR2"/>
<dbReference type="PaxDb" id="9606-ENSP00000217131"/>
<dbReference type="PeptideAtlas" id="Q9UBR2"/>
<dbReference type="PRIDE" id="Q9UBR2"/>
<dbReference type="ProteomicsDB" id="84036"/>
<dbReference type="Pumba" id="Q9UBR2"/>
<dbReference type="Antibodypedia" id="35172">
    <property type="antibodies" value="375 antibodies from 28 providers"/>
</dbReference>
<dbReference type="DNASU" id="1522"/>
<dbReference type="Ensembl" id="ENST00000217131.6">
    <property type="protein sequence ID" value="ENSP00000217131.5"/>
    <property type="gene ID" value="ENSG00000101160.15"/>
</dbReference>
<dbReference type="GeneID" id="1522"/>
<dbReference type="KEGG" id="hsa:1522"/>
<dbReference type="MANE-Select" id="ENST00000217131.6">
    <property type="protein sequence ID" value="ENSP00000217131.5"/>
    <property type="RefSeq nucleotide sequence ID" value="NM_001336.4"/>
    <property type="RefSeq protein sequence ID" value="NP_001327.2"/>
</dbReference>
<dbReference type="UCSC" id="uc002yai.3">
    <property type="organism name" value="human"/>
</dbReference>
<dbReference type="AGR" id="HGNC:2547"/>
<dbReference type="CTD" id="1522"/>
<dbReference type="DisGeNET" id="1522"/>
<dbReference type="GeneCards" id="CTSZ"/>
<dbReference type="HGNC" id="HGNC:2547">
    <property type="gene designation" value="CTSZ"/>
</dbReference>
<dbReference type="HPA" id="ENSG00000101160">
    <property type="expression patterns" value="Low tissue specificity"/>
</dbReference>
<dbReference type="MIM" id="603169">
    <property type="type" value="gene"/>
</dbReference>
<dbReference type="neXtProt" id="NX_Q9UBR2"/>
<dbReference type="OpenTargets" id="ENSG00000101160"/>
<dbReference type="PharmGKB" id="PA27043"/>
<dbReference type="VEuPathDB" id="HostDB:ENSG00000101160"/>
<dbReference type="eggNOG" id="KOG1543">
    <property type="taxonomic scope" value="Eukaryota"/>
</dbReference>
<dbReference type="GeneTree" id="ENSGT00940000155569"/>
<dbReference type="HOGENOM" id="CLU_012184_2_1_1"/>
<dbReference type="InParanoid" id="Q9UBR2"/>
<dbReference type="OMA" id="QSWDWRN"/>
<dbReference type="OrthoDB" id="190265at2759"/>
<dbReference type="PAN-GO" id="Q9UBR2">
    <property type="GO annotations" value="4 GO annotations based on evolutionary models"/>
</dbReference>
<dbReference type="PhylomeDB" id="Q9UBR2"/>
<dbReference type="TreeFam" id="TF313225"/>
<dbReference type="BRENDA" id="3.4.18.1">
    <property type="organism ID" value="2681"/>
</dbReference>
<dbReference type="PathwayCommons" id="Q9UBR2"/>
<dbReference type="Reactome" id="R-HSA-2022377">
    <property type="pathway name" value="Metabolism of Angiotensinogen to Angiotensins"/>
</dbReference>
<dbReference type="Reactome" id="R-HSA-204005">
    <property type="pathway name" value="COPII-mediated vesicle transport"/>
</dbReference>
<dbReference type="Reactome" id="R-HSA-432720">
    <property type="pathway name" value="Lysosome Vesicle Biogenesis"/>
</dbReference>
<dbReference type="Reactome" id="R-HSA-5694530">
    <property type="pathway name" value="Cargo concentration in the ER"/>
</dbReference>
<dbReference type="Reactome" id="R-HSA-6798695">
    <property type="pathway name" value="Neutrophil degranulation"/>
</dbReference>
<dbReference type="SignaLink" id="Q9UBR2"/>
<dbReference type="BioGRID-ORCS" id="1522">
    <property type="hits" value="15 hits in 1154 CRISPR screens"/>
</dbReference>
<dbReference type="ChiTaRS" id="CTSZ">
    <property type="organism name" value="human"/>
</dbReference>
<dbReference type="EvolutionaryTrace" id="Q9UBR2"/>
<dbReference type="GeneWiki" id="Cathepsin_Z"/>
<dbReference type="GenomeRNAi" id="1522"/>
<dbReference type="Pharos" id="Q9UBR2">
    <property type="development level" value="Tchem"/>
</dbReference>
<dbReference type="PRO" id="PR:Q9UBR2"/>
<dbReference type="Proteomes" id="UP000005640">
    <property type="component" value="Chromosome 20"/>
</dbReference>
<dbReference type="RNAct" id="Q9UBR2">
    <property type="molecule type" value="protein"/>
</dbReference>
<dbReference type="Bgee" id="ENSG00000101160">
    <property type="expression patterns" value="Expressed in monocyte and 167 other cell types or tissues"/>
</dbReference>
<dbReference type="GO" id="GO:0005938">
    <property type="term" value="C:cell cortex"/>
    <property type="evidence" value="ECO:0000314"/>
    <property type="project" value="CAFA"/>
</dbReference>
<dbReference type="GO" id="GO:0009986">
    <property type="term" value="C:cell surface"/>
    <property type="evidence" value="ECO:0007669"/>
    <property type="project" value="Ensembl"/>
</dbReference>
<dbReference type="GO" id="GO:0062023">
    <property type="term" value="C:collagen-containing extracellular matrix"/>
    <property type="evidence" value="ECO:0007005"/>
    <property type="project" value="BHF-UCL"/>
</dbReference>
<dbReference type="GO" id="GO:0030134">
    <property type="term" value="C:COPII-coated ER to Golgi transport vesicle"/>
    <property type="evidence" value="ECO:0000304"/>
    <property type="project" value="Reactome"/>
</dbReference>
<dbReference type="GO" id="GO:0031410">
    <property type="term" value="C:cytoplasmic vesicle"/>
    <property type="evidence" value="ECO:0000314"/>
    <property type="project" value="CAFA"/>
</dbReference>
<dbReference type="GO" id="GO:0005783">
    <property type="term" value="C:endoplasmic reticulum"/>
    <property type="evidence" value="ECO:0000314"/>
    <property type="project" value="LIFEdb"/>
</dbReference>
<dbReference type="GO" id="GO:0005788">
    <property type="term" value="C:endoplasmic reticulum lumen"/>
    <property type="evidence" value="ECO:0000304"/>
    <property type="project" value="Reactome"/>
</dbReference>
<dbReference type="GO" id="GO:0033116">
    <property type="term" value="C:endoplasmic reticulum-Golgi intermediate compartment membrane"/>
    <property type="evidence" value="ECO:0000304"/>
    <property type="project" value="Reactome"/>
</dbReference>
<dbReference type="GO" id="GO:0070062">
    <property type="term" value="C:extracellular exosome"/>
    <property type="evidence" value="ECO:0007005"/>
    <property type="project" value="UniProtKB"/>
</dbReference>
<dbReference type="GO" id="GO:0005576">
    <property type="term" value="C:extracellular region"/>
    <property type="evidence" value="ECO:0000304"/>
    <property type="project" value="Reactome"/>
</dbReference>
<dbReference type="GO" id="GO:0005615">
    <property type="term" value="C:extracellular space"/>
    <property type="evidence" value="ECO:0000314"/>
    <property type="project" value="CAFA"/>
</dbReference>
<dbReference type="GO" id="GO:1904813">
    <property type="term" value="C:ficolin-1-rich granule lumen"/>
    <property type="evidence" value="ECO:0000304"/>
    <property type="project" value="Reactome"/>
</dbReference>
<dbReference type="GO" id="GO:0030426">
    <property type="term" value="C:growth cone"/>
    <property type="evidence" value="ECO:0007669"/>
    <property type="project" value="Ensembl"/>
</dbReference>
<dbReference type="GO" id="GO:0043231">
    <property type="term" value="C:intracellular membrane-bounded organelle"/>
    <property type="evidence" value="ECO:0000314"/>
    <property type="project" value="HPA"/>
</dbReference>
<dbReference type="GO" id="GO:0005764">
    <property type="term" value="C:lysosome"/>
    <property type="evidence" value="ECO:0000314"/>
    <property type="project" value="CAFA"/>
</dbReference>
<dbReference type="GO" id="GO:0005886">
    <property type="term" value="C:plasma membrane"/>
    <property type="evidence" value="ECO:0000304"/>
    <property type="project" value="Reactome"/>
</dbReference>
<dbReference type="GO" id="GO:0035580">
    <property type="term" value="C:specific granule lumen"/>
    <property type="evidence" value="ECO:0000304"/>
    <property type="project" value="Reactome"/>
</dbReference>
<dbReference type="GO" id="GO:0004180">
    <property type="term" value="F:carboxypeptidase activity"/>
    <property type="evidence" value="ECO:0000315"/>
    <property type="project" value="CAFA"/>
</dbReference>
<dbReference type="GO" id="GO:0016807">
    <property type="term" value="F:cysteine-type carboxypeptidase activity"/>
    <property type="evidence" value="ECO:0007669"/>
    <property type="project" value="UniProtKB-EC"/>
</dbReference>
<dbReference type="GO" id="GO:0004197">
    <property type="term" value="F:cysteine-type endopeptidase activity"/>
    <property type="evidence" value="ECO:0000318"/>
    <property type="project" value="GO_Central"/>
</dbReference>
<dbReference type="GO" id="GO:0008234">
    <property type="term" value="F:cysteine-type peptidase activity"/>
    <property type="evidence" value="ECO:0000314"/>
    <property type="project" value="ARUK-UCL"/>
</dbReference>
<dbReference type="GO" id="GO:0002003">
    <property type="term" value="P:angiotensin maturation"/>
    <property type="evidence" value="ECO:0000304"/>
    <property type="project" value="Reactome"/>
</dbReference>
<dbReference type="GO" id="GO:0060441">
    <property type="term" value="P:epithelial tube branching involved in lung morphogenesis"/>
    <property type="evidence" value="ECO:0007669"/>
    <property type="project" value="Ensembl"/>
</dbReference>
<dbReference type="GO" id="GO:0010757">
    <property type="term" value="P:negative regulation of plasminogen activation"/>
    <property type="evidence" value="ECO:0000315"/>
    <property type="project" value="CAFA"/>
</dbReference>
<dbReference type="GO" id="GO:0006508">
    <property type="term" value="P:proteolysis"/>
    <property type="evidence" value="ECO:0000315"/>
    <property type="project" value="CAFA"/>
</dbReference>
<dbReference type="GO" id="GO:0051603">
    <property type="term" value="P:proteolysis involved in protein catabolic process"/>
    <property type="evidence" value="ECO:0000318"/>
    <property type="project" value="GO_Central"/>
</dbReference>
<dbReference type="CDD" id="cd02698">
    <property type="entry name" value="Peptidase_C1A_CathepsinX"/>
    <property type="match status" value="1"/>
</dbReference>
<dbReference type="FunFam" id="3.90.70.10:FF:000060">
    <property type="entry name" value="Cathepsin Z"/>
    <property type="match status" value="1"/>
</dbReference>
<dbReference type="Gene3D" id="3.90.70.10">
    <property type="entry name" value="Cysteine proteinases"/>
    <property type="match status" value="1"/>
</dbReference>
<dbReference type="InterPro" id="IPR033157">
    <property type="entry name" value="CTSZ"/>
</dbReference>
<dbReference type="InterPro" id="IPR038765">
    <property type="entry name" value="Papain-like_cys_pep_sf"/>
</dbReference>
<dbReference type="InterPro" id="IPR025661">
    <property type="entry name" value="Pept_asp_AS"/>
</dbReference>
<dbReference type="InterPro" id="IPR013128">
    <property type="entry name" value="Peptidase_C1A"/>
</dbReference>
<dbReference type="InterPro" id="IPR000668">
    <property type="entry name" value="Peptidase_C1A_C"/>
</dbReference>
<dbReference type="PANTHER" id="PTHR12411">
    <property type="entry name" value="CYSTEINE PROTEASE FAMILY C1-RELATED"/>
    <property type="match status" value="1"/>
</dbReference>
<dbReference type="Pfam" id="PF00112">
    <property type="entry name" value="Peptidase_C1"/>
    <property type="match status" value="1"/>
</dbReference>
<dbReference type="PRINTS" id="PR00705">
    <property type="entry name" value="PAPAIN"/>
</dbReference>
<dbReference type="SMART" id="SM00645">
    <property type="entry name" value="Pept_C1"/>
    <property type="match status" value="1"/>
</dbReference>
<dbReference type="SUPFAM" id="SSF54001">
    <property type="entry name" value="Cysteine proteinases"/>
    <property type="match status" value="1"/>
</dbReference>
<dbReference type="PROSITE" id="PS00640">
    <property type="entry name" value="THIOL_PROTEASE_ASN"/>
    <property type="match status" value="1"/>
</dbReference>
<organism>
    <name type="scientific">Homo sapiens</name>
    <name type="common">Human</name>
    <dbReference type="NCBI Taxonomy" id="9606"/>
    <lineage>
        <taxon>Eukaryota</taxon>
        <taxon>Metazoa</taxon>
        <taxon>Chordata</taxon>
        <taxon>Craniata</taxon>
        <taxon>Vertebrata</taxon>
        <taxon>Euteleostomi</taxon>
        <taxon>Mammalia</taxon>
        <taxon>Eutheria</taxon>
        <taxon>Euarchontoglires</taxon>
        <taxon>Primates</taxon>
        <taxon>Haplorrhini</taxon>
        <taxon>Catarrhini</taxon>
        <taxon>Hominidae</taxon>
        <taxon>Homo</taxon>
    </lineage>
</organism>
<gene>
    <name type="primary">CTSZ</name>
</gene>
<name>CATZ_HUMAN</name>
<proteinExistence type="evidence at protein level"/>
<feature type="signal peptide" evidence="2">
    <location>
        <begin position="1"/>
        <end position="23"/>
    </location>
</feature>
<feature type="propeptide" id="PRO_0000026285" description="Activation peptide">
    <location>
        <begin position="24"/>
        <end position="61"/>
    </location>
</feature>
<feature type="chain" id="PRO_0000026286" description="Cathepsin Z">
    <location>
        <begin position="62"/>
        <end position="303"/>
    </location>
</feature>
<feature type="active site" evidence="11 12">
    <location>
        <position position="92"/>
    </location>
</feature>
<feature type="active site" evidence="11 12">
    <location>
        <position position="241"/>
    </location>
</feature>
<feature type="active site" evidence="11 12">
    <location>
        <position position="261"/>
    </location>
</feature>
<feature type="glycosylation site" description="N-linked (GlcNAc...) asparagine" evidence="8">
    <location>
        <position position="184"/>
    </location>
</feature>
<feature type="glycosylation site" description="N-linked (GlcNAc...) asparagine" evidence="2">
    <location>
        <position position="224"/>
    </location>
</feature>
<feature type="disulfide bond" evidence="6 13">
    <location>
        <begin position="33"/>
        <end position="92"/>
    </location>
</feature>
<feature type="disulfide bond" evidence="6 7 13 14">
    <location>
        <begin position="89"/>
        <end position="132"/>
    </location>
</feature>
<feature type="disulfide bond" evidence="6 7 13 14">
    <location>
        <begin position="126"/>
        <end position="164"/>
    </location>
</feature>
<feature type="disulfide bond" evidence="6 7 13 14">
    <location>
        <begin position="154"/>
        <end position="170"/>
    </location>
</feature>
<feature type="disulfide bond" evidence="6 7 13 14">
    <location>
        <begin position="173"/>
        <end position="179"/>
    </location>
</feature>
<feature type="disulfide bond" evidence="6 7 13 14">
    <location>
        <begin position="214"/>
        <end position="296"/>
    </location>
</feature>
<feature type="sequence variant" id="VAR_010254" description="In dbSNP:rs778998634." evidence="9">
    <original>P</original>
    <variation>S</variation>
    <location>
        <position position="36"/>
    </location>
</feature>
<feature type="sequence variant" id="VAR_010255" description="Requires 2 nucleotide substitutions." evidence="9">
    <original>A</original>
    <variation>R</variation>
    <location>
        <position position="129"/>
    </location>
</feature>
<feature type="sequence variant" id="VAR_033719" description="In dbSNP:rs34069356.">
    <original>A</original>
    <variation>T</variation>
    <location>
        <position position="286"/>
    </location>
</feature>
<feature type="sequence conflict" description="In Ref. 2; AAC39839." evidence="10" ref="2">
    <original>S</original>
    <variation>T</variation>
    <location>
        <position position="48"/>
    </location>
</feature>
<feature type="sequence conflict" description="In Ref. 1; AAC61477." evidence="10" ref="1">
    <original>P</original>
    <variation>S</variation>
    <location>
        <position position="150"/>
    </location>
</feature>
<feature type="strand" evidence="15">
    <location>
        <begin position="40"/>
        <end position="42"/>
    </location>
</feature>
<feature type="helix" evidence="15">
    <location>
        <begin position="59"/>
        <end position="61"/>
    </location>
</feature>
<feature type="strand" evidence="16">
    <location>
        <begin position="85"/>
        <end position="87"/>
    </location>
</feature>
<feature type="helix" evidence="15">
    <location>
        <begin position="92"/>
        <end position="108"/>
    </location>
</feature>
<feature type="turn" evidence="15">
    <location>
        <begin position="109"/>
        <end position="111"/>
    </location>
</feature>
<feature type="helix" evidence="15">
    <location>
        <begin position="120"/>
        <end position="126"/>
    </location>
</feature>
<feature type="strand" evidence="15">
    <location>
        <begin position="127"/>
        <end position="131"/>
    </location>
</feature>
<feature type="strand" evidence="15">
    <location>
        <begin position="133"/>
        <end position="135"/>
    </location>
</feature>
<feature type="helix" evidence="15">
    <location>
        <begin position="137"/>
        <end position="146"/>
    </location>
</feature>
<feature type="strand" evidence="16">
    <location>
        <begin position="149"/>
        <end position="151"/>
    </location>
</feature>
<feature type="helix" evidence="15">
    <location>
        <begin position="152"/>
        <end position="154"/>
    </location>
</feature>
<feature type="helix" evidence="15">
    <location>
        <begin position="166"/>
        <end position="169"/>
    </location>
</feature>
<feature type="strand" evidence="15">
    <location>
        <begin position="170"/>
        <end position="175"/>
    </location>
</feature>
<feature type="strand" evidence="15">
    <location>
        <begin position="178"/>
        <end position="181"/>
    </location>
</feature>
<feature type="strand" evidence="15">
    <location>
        <begin position="190"/>
        <end position="196"/>
    </location>
</feature>
<feature type="helix" evidence="15">
    <location>
        <begin position="199"/>
        <end position="209"/>
    </location>
</feature>
<feature type="strand" evidence="15">
    <location>
        <begin position="212"/>
        <end position="216"/>
    </location>
</feature>
<feature type="helix" evidence="15">
    <location>
        <begin position="220"/>
        <end position="223"/>
    </location>
</feature>
<feature type="strand" evidence="15">
    <location>
        <begin position="227"/>
        <end position="230"/>
    </location>
</feature>
<feature type="strand" evidence="15">
    <location>
        <begin position="241"/>
        <end position="251"/>
    </location>
</feature>
<feature type="strand" evidence="15">
    <location>
        <begin position="254"/>
        <end position="260"/>
    </location>
</feature>
<feature type="strand" evidence="15">
    <location>
        <begin position="272"/>
        <end position="276"/>
    </location>
</feature>
<feature type="helix" evidence="15">
    <location>
        <begin position="280"/>
        <end position="283"/>
    </location>
</feature>
<feature type="helix" evidence="15">
    <location>
        <begin position="285"/>
        <end position="287"/>
    </location>
</feature>
<feature type="turn" evidence="15">
    <location>
        <begin position="290"/>
        <end position="293"/>
    </location>
</feature>
<feature type="strand" evidence="15">
    <location>
        <begin position="296"/>
        <end position="301"/>
    </location>
</feature>
<comment type="function">
    <text evidence="1 4">Exhibits carboxy-monopeptidase as well as carboxy-dipeptidase activity (PubMed:10504234). Capable of producing kinin potentiating peptides (By similarity).</text>
</comment>
<comment type="catalytic activity">
    <reaction evidence="4">
        <text>Release of C-terminal amino acid residues with broad specificity, but lacks action on C-terminal proline. Shows weak endopeptidase activity.</text>
        <dbReference type="EC" id="3.4.18.1"/>
    </reaction>
</comment>
<comment type="activity regulation">
    <text evidence="11">The disulfide bridge formed between Cys-33 in the propeptide and the active site residue Cys-92 may prevent activation of the zymogen through formation of a reversible covalent bond with the active site residue.</text>
</comment>
<comment type="interaction">
    <interactant intactId="EBI-8636823">
        <id>Q9UBR2</id>
    </interactant>
    <interactant intactId="EBI-1642333">
        <id>Q9BYV9</id>
        <label>BACH2</label>
    </interactant>
    <organismsDiffer>false</organismsDiffer>
    <experiments>3</experiments>
</comment>
<comment type="interaction">
    <interactant intactId="EBI-8636823">
        <id>Q9UBR2</id>
    </interactant>
    <interactant intactId="EBI-11524452">
        <id>Q8N9N5-2</id>
        <label>BANP</label>
    </interactant>
    <organismsDiffer>false</organismsDiffer>
    <experiments>3</experiments>
</comment>
<comment type="interaction">
    <interactant intactId="EBI-8636823">
        <id>Q9UBR2</id>
    </interactant>
    <interactant intactId="EBI-3867333">
        <id>A8MQ03</id>
        <label>CYSRT1</label>
    </interactant>
    <organismsDiffer>false</organismsDiffer>
    <experiments>3</experiments>
</comment>
<comment type="interaction">
    <interactant intactId="EBI-8636823">
        <id>Q9UBR2</id>
    </interactant>
    <interactant intactId="EBI-750641">
        <id>Q5TD97</id>
        <label>FHL5</label>
    </interactant>
    <organismsDiffer>false</organismsDiffer>
    <experiments>3</experiments>
</comment>
<comment type="interaction">
    <interactant intactId="EBI-8636823">
        <id>Q9UBR2</id>
    </interactant>
    <interactant intactId="EBI-7116203">
        <id>O75031</id>
        <label>HSF2BP</label>
    </interactant>
    <organismsDiffer>false</organismsDiffer>
    <experiments>3</experiments>
</comment>
<comment type="interaction">
    <interactant intactId="EBI-8636823">
        <id>Q9UBR2</id>
    </interactant>
    <interactant intactId="EBI-1058674">
        <id>Q92764</id>
        <label>KRT35</label>
    </interactant>
    <organismsDiffer>false</organismsDiffer>
    <experiments>3</experiments>
</comment>
<comment type="interaction">
    <interactant intactId="EBI-8636823">
        <id>Q9UBR2</id>
    </interactant>
    <interactant intactId="EBI-10171697">
        <id>Q6A162</id>
        <label>KRT40</label>
    </interactant>
    <organismsDiffer>false</organismsDiffer>
    <experiments>3</experiments>
</comment>
<comment type="interaction">
    <interactant intactId="EBI-8636823">
        <id>Q9UBR2</id>
    </interactant>
    <interactant intactId="EBI-11959885">
        <id>Q07627</id>
        <label>KRTAP1-1</label>
    </interactant>
    <organismsDiffer>false</organismsDiffer>
    <experiments>3</experiments>
</comment>
<comment type="interaction">
    <interactant intactId="EBI-8636823">
        <id>Q9UBR2</id>
    </interactant>
    <interactant intactId="EBI-11955579">
        <id>P60014</id>
        <label>KRTAP10-10</label>
    </interactant>
    <organismsDiffer>false</organismsDiffer>
    <experiments>3</experiments>
</comment>
<comment type="interaction">
    <interactant intactId="EBI-8636823">
        <id>Q9UBR2</id>
    </interactant>
    <interactant intactId="EBI-14065470">
        <id>Q9BYR9</id>
        <label>KRTAP2-4</label>
    </interactant>
    <organismsDiffer>false</organismsDiffer>
    <experiments>3</experiments>
</comment>
<comment type="interaction">
    <interactant intactId="EBI-8636823">
        <id>Q9UBR2</id>
    </interactant>
    <interactant intactId="EBI-3957694">
        <id>Q9BYR6</id>
        <label>KRTAP3-3</label>
    </interactant>
    <organismsDiffer>false</organismsDiffer>
    <experiments>3</experiments>
</comment>
<comment type="interaction">
    <interactant intactId="EBI-8636823">
        <id>Q9UBR2</id>
    </interactant>
    <interactant intactId="EBI-3958099">
        <id>P26371</id>
        <label>KRTAP5-9</label>
    </interactant>
    <organismsDiffer>false</organismsDiffer>
    <experiments>8</experiments>
</comment>
<comment type="interaction">
    <interactant intactId="EBI-8636823">
        <id>Q9UBR2</id>
    </interactant>
    <interactant intactId="EBI-22311199">
        <id>Q3LI67</id>
        <label>KRTAP6-3</label>
    </interactant>
    <organismsDiffer>false</organismsDiffer>
    <experiments>3</experiments>
</comment>
<comment type="interaction">
    <interactant intactId="EBI-8636823">
        <id>Q9UBR2</id>
    </interactant>
    <interactant intactId="EBI-10172526">
        <id>Q9UJV3-2</id>
        <label>MID2</label>
    </interactant>
    <organismsDiffer>false</organismsDiffer>
    <experiments>6</experiments>
</comment>
<comment type="interaction">
    <interactant intactId="EBI-8636823">
        <id>Q9UBR2</id>
    </interactant>
    <interactant intactId="EBI-742948">
        <id>Q5JR59</id>
        <label>MTUS2</label>
    </interactant>
    <organismsDiffer>false</organismsDiffer>
    <experiments>3</experiments>
</comment>
<comment type="interaction">
    <interactant intactId="EBI-8636823">
        <id>Q9UBR2</id>
    </interactant>
    <interactant intactId="EBI-945833">
        <id>Q7Z3S9</id>
        <label>NOTCH2NLA</label>
    </interactant>
    <organismsDiffer>false</organismsDiffer>
    <experiments>4</experiments>
</comment>
<comment type="interaction">
    <interactant intactId="EBI-8636823">
        <id>Q9UBR2</id>
    </interactant>
    <interactant intactId="EBI-22310682">
        <id>P0DPK4</id>
        <label>NOTCH2NLC</label>
    </interactant>
    <organismsDiffer>false</organismsDiffer>
    <experiments>3</experiments>
</comment>
<comment type="interaction">
    <interactant intactId="EBI-8636823">
        <id>Q9UBR2</id>
    </interactant>
    <interactant intactId="EBI-740019">
        <id>O15162</id>
        <label>PLSCR1</label>
    </interactant>
    <organismsDiffer>false</organismsDiffer>
    <experiments>3</experiments>
</comment>
<comment type="interaction">
    <interactant intactId="EBI-8636823">
        <id>Q9UBR2</id>
    </interactant>
    <interactant intactId="EBI-949753">
        <id>Q63HR2</id>
        <label>TNS2</label>
    </interactant>
    <organismsDiffer>false</organismsDiffer>
    <experiments>3</experiments>
</comment>
<comment type="subcellular location">
    <subcellularLocation>
        <location>Lysosome</location>
    </subcellularLocation>
</comment>
<comment type="tissue specificity">
    <text evidence="5">Widely expressed.</text>
</comment>
<comment type="similarity">
    <text evidence="3">Belongs to the peptidase C1 family.</text>
</comment>
<evidence type="ECO:0000250" key="1">
    <source>
        <dbReference type="UniProtKB" id="Q9R1T3"/>
    </source>
</evidence>
<evidence type="ECO:0000255" key="2"/>
<evidence type="ECO:0000255" key="3">
    <source>
        <dbReference type="PROSITE-ProRule" id="PRU10090"/>
    </source>
</evidence>
<evidence type="ECO:0000269" key="4">
    <source>
    </source>
</evidence>
<evidence type="ECO:0000269" key="5">
    <source>
    </source>
</evidence>
<evidence type="ECO:0000269" key="6">
    <source>
    </source>
</evidence>
<evidence type="ECO:0000269" key="7">
    <source>
    </source>
</evidence>
<evidence type="ECO:0000269" key="8">
    <source>
    </source>
</evidence>
<evidence type="ECO:0000269" key="9">
    <source>
    </source>
</evidence>
<evidence type="ECO:0000305" key="10"/>
<evidence type="ECO:0000305" key="11">
    <source>
    </source>
</evidence>
<evidence type="ECO:0000305" key="12">
    <source>
    </source>
</evidence>
<evidence type="ECO:0007744" key="13">
    <source>
        <dbReference type="PDB" id="1DEU"/>
    </source>
</evidence>
<evidence type="ECO:0007744" key="14">
    <source>
        <dbReference type="PDB" id="1EF7"/>
    </source>
</evidence>
<evidence type="ECO:0007829" key="15">
    <source>
        <dbReference type="PDB" id="1DEU"/>
    </source>
</evidence>
<evidence type="ECO:0007829" key="16">
    <source>
        <dbReference type="PDB" id="1EF7"/>
    </source>
</evidence>
<protein>
    <recommendedName>
        <fullName>Cathepsin Z</fullName>
        <ecNumber evidence="4">3.4.18.1</ecNumber>
    </recommendedName>
    <alternativeName>
        <fullName>Cathepsin P</fullName>
    </alternativeName>
    <alternativeName>
        <fullName>Cathepsin X</fullName>
    </alternativeName>
</protein>
<accession>Q9UBR2</accession>
<accession>B2RC40</accession>
<accession>O75331</accession>
<accession>Q9UQV5</accession>
<accession>Q9UQV6</accession>
<keyword id="KW-0002">3D-structure</keyword>
<keyword id="KW-1015">Disulfide bond</keyword>
<keyword id="KW-0325">Glycoprotein</keyword>
<keyword id="KW-0378">Hydrolase</keyword>
<keyword id="KW-0458">Lysosome</keyword>
<keyword id="KW-0645">Protease</keyword>
<keyword id="KW-1267">Proteomics identification</keyword>
<keyword id="KW-1185">Reference proteome</keyword>
<keyword id="KW-0732">Signal</keyword>
<keyword id="KW-0788">Thiol protease</keyword>
<keyword id="KW-0865">Zymogen</keyword>
<sequence length="303" mass="33868">MARRGPGWRPLLLLVLLAGAAQGGLYFRRGQTCYRPLRGDGLAPLGRSTYPRPHEYLSPADLPKSWDWRNVDGVNYASITRNQHIPQYCGSCWAHASTSAMADRINIKRKGAWPSTLLSVQNVIDCGNAGSCEGGNDLSVWDYAHQHGIPDETCNNYQAKDQECDKFNQCGTCNEFKECHAIRNYTLWRVGDYGSLSGREKMMAEIYANGPISCGIMATERLANYTGGIYAEYQDTTYINHVVSVAGWGISDGTEYWIVRNSWGEPWGERGWLRIVTSTYKDGKGARYNLAIEEHCTFGDPIV</sequence>